<comment type="function">
    <text>Histones H1 are necessary for the condensation of nucleosome chains into higher-order structures.</text>
</comment>
<comment type="subcellular location">
    <subcellularLocation>
        <location>Nucleus</location>
    </subcellularLocation>
    <subcellularLocation>
        <location>Chromosome</location>
    </subcellularLocation>
</comment>
<comment type="similarity">
    <text evidence="1">Belongs to the histone H1/H5 family.</text>
</comment>
<protein>
    <recommendedName>
        <fullName>Histone H1</fullName>
    </recommendedName>
</protein>
<keyword id="KW-0158">Chromosome</keyword>
<keyword id="KW-0238">DNA-binding</keyword>
<keyword id="KW-0539">Nucleus</keyword>
<feature type="chain" id="PRO_0000195971" description="Histone H1">
    <location>
        <begin position="1"/>
        <end position="231"/>
    </location>
</feature>
<feature type="domain" description="H15" evidence="1">
    <location>
        <begin position="38"/>
        <end position="112"/>
    </location>
</feature>
<feature type="region of interest" description="Disordered" evidence="2">
    <location>
        <begin position="1"/>
        <end position="44"/>
    </location>
</feature>
<feature type="region of interest" description="Disordered" evidence="2">
    <location>
        <begin position="124"/>
        <end position="231"/>
    </location>
</feature>
<feature type="compositionally biased region" description="Low complexity" evidence="2">
    <location>
        <begin position="1"/>
        <end position="17"/>
    </location>
</feature>
<feature type="compositionally biased region" description="Basic residues" evidence="2">
    <location>
        <begin position="145"/>
        <end position="171"/>
    </location>
</feature>
<feature type="compositionally biased region" description="Basic residues" evidence="2">
    <location>
        <begin position="178"/>
        <end position="213"/>
    </location>
</feature>
<feature type="compositionally biased region" description="Basic residues" evidence="2">
    <location>
        <begin position="221"/>
        <end position="231"/>
    </location>
</feature>
<dbReference type="EMBL" id="X56335">
    <property type="protein sequence ID" value="CAA39775.1"/>
    <property type="molecule type" value="Genomic_DNA"/>
</dbReference>
<dbReference type="PIR" id="S18006">
    <property type="entry name" value="S18006"/>
</dbReference>
<dbReference type="SMR" id="P21895"/>
<dbReference type="GO" id="GO:0000786">
    <property type="term" value="C:nucleosome"/>
    <property type="evidence" value="ECO:0007669"/>
    <property type="project" value="InterPro"/>
</dbReference>
<dbReference type="GO" id="GO:0005634">
    <property type="term" value="C:nucleus"/>
    <property type="evidence" value="ECO:0007669"/>
    <property type="project" value="UniProtKB-SubCell"/>
</dbReference>
<dbReference type="GO" id="GO:0003690">
    <property type="term" value="F:double-stranded DNA binding"/>
    <property type="evidence" value="ECO:0007669"/>
    <property type="project" value="TreeGrafter"/>
</dbReference>
<dbReference type="GO" id="GO:0031492">
    <property type="term" value="F:nucleosomal DNA binding"/>
    <property type="evidence" value="ECO:0007669"/>
    <property type="project" value="TreeGrafter"/>
</dbReference>
<dbReference type="GO" id="GO:0030527">
    <property type="term" value="F:structural constituent of chromatin"/>
    <property type="evidence" value="ECO:0007669"/>
    <property type="project" value="InterPro"/>
</dbReference>
<dbReference type="GO" id="GO:0030261">
    <property type="term" value="P:chromosome condensation"/>
    <property type="evidence" value="ECO:0007669"/>
    <property type="project" value="TreeGrafter"/>
</dbReference>
<dbReference type="GO" id="GO:0045910">
    <property type="term" value="P:negative regulation of DNA recombination"/>
    <property type="evidence" value="ECO:0007669"/>
    <property type="project" value="TreeGrafter"/>
</dbReference>
<dbReference type="GO" id="GO:0006334">
    <property type="term" value="P:nucleosome assembly"/>
    <property type="evidence" value="ECO:0007669"/>
    <property type="project" value="InterPro"/>
</dbReference>
<dbReference type="CDD" id="cd00073">
    <property type="entry name" value="H15"/>
    <property type="match status" value="1"/>
</dbReference>
<dbReference type="FunFam" id="1.10.10.10:FF:000140">
    <property type="entry name" value="Histone H1.0"/>
    <property type="match status" value="1"/>
</dbReference>
<dbReference type="Gene3D" id="1.10.10.10">
    <property type="entry name" value="Winged helix-like DNA-binding domain superfamily/Winged helix DNA-binding domain"/>
    <property type="match status" value="1"/>
</dbReference>
<dbReference type="InterPro" id="IPR005819">
    <property type="entry name" value="H1/H5"/>
</dbReference>
<dbReference type="InterPro" id="IPR005818">
    <property type="entry name" value="Histone_H1/H5_H15"/>
</dbReference>
<dbReference type="InterPro" id="IPR036388">
    <property type="entry name" value="WH-like_DNA-bd_sf"/>
</dbReference>
<dbReference type="InterPro" id="IPR036390">
    <property type="entry name" value="WH_DNA-bd_sf"/>
</dbReference>
<dbReference type="PANTHER" id="PTHR11467:SF20">
    <property type="entry name" value="H15 DOMAIN-CONTAINING PROTEIN-RELATED"/>
    <property type="match status" value="1"/>
</dbReference>
<dbReference type="PANTHER" id="PTHR11467">
    <property type="entry name" value="HISTONE H1"/>
    <property type="match status" value="1"/>
</dbReference>
<dbReference type="Pfam" id="PF00538">
    <property type="entry name" value="Linker_histone"/>
    <property type="match status" value="1"/>
</dbReference>
<dbReference type="PRINTS" id="PR00624">
    <property type="entry name" value="HISTONEH5"/>
</dbReference>
<dbReference type="SMART" id="SM00526">
    <property type="entry name" value="H15"/>
    <property type="match status" value="1"/>
</dbReference>
<dbReference type="SUPFAM" id="SSF46785">
    <property type="entry name" value="Winged helix' DNA-binding domain"/>
    <property type="match status" value="1"/>
</dbReference>
<dbReference type="PROSITE" id="PS51504">
    <property type="entry name" value="H15"/>
    <property type="match status" value="1"/>
</dbReference>
<reference key="1">
    <citation type="journal article" date="1990" name="J. Mol. Biol.">
        <title>New foldback transposable element TFB1 found in histone genes of the midge Chironomus thummi.</title>
        <authorList>
            <person name="Hankeln T."/>
            <person name="Schmidt E.R."/>
        </authorList>
    </citation>
    <scope>NUCLEOTIDE SEQUENCE [GENOMIC DNA]</scope>
</reference>
<reference key="2">
    <citation type="journal article" date="1991" name="Chromosoma">
        <title>The organization, localization and nucleotide sequence of the histone genes of the midge Chironomus thummi.</title>
        <authorList>
            <person name="Hankeln T."/>
            <person name="Schmidt E.R."/>
        </authorList>
    </citation>
    <scope>NUCLEOTIDE SEQUENCE [GENOMIC DNA]</scope>
</reference>
<evidence type="ECO:0000255" key="1">
    <source>
        <dbReference type="PROSITE-ProRule" id="PRU00837"/>
    </source>
</evidence>
<evidence type="ECO:0000256" key="2">
    <source>
        <dbReference type="SAM" id="MobiDB-lite"/>
    </source>
</evidence>
<organism>
    <name type="scientific">Chironomus thummi thummi</name>
    <name type="common">Midge</name>
    <dbReference type="NCBI Taxonomy" id="7155"/>
    <lineage>
        <taxon>Eukaryota</taxon>
        <taxon>Metazoa</taxon>
        <taxon>Ecdysozoa</taxon>
        <taxon>Arthropoda</taxon>
        <taxon>Hexapoda</taxon>
        <taxon>Insecta</taxon>
        <taxon>Pterygota</taxon>
        <taxon>Neoptera</taxon>
        <taxon>Endopterygota</taxon>
        <taxon>Diptera</taxon>
        <taxon>Nematocera</taxon>
        <taxon>Chironomoidea</taxon>
        <taxon>Chironomidae</taxon>
        <taxon>Chironominae</taxon>
        <taxon>Chironomus</taxon>
    </lineage>
</organism>
<proteinExistence type="inferred from homology"/>
<accession>P21895</accession>
<sequence>MSDPAIEVAPVPVASPAKAKKEKKPKSDKPKKPKAPRTHPPVSDMIVNAIKTLKERGGSSVQAIKKFLVAQYKVDTDKLSPFIKKYLKSAVEKGQLLQTKGKGASGSFKLPAAAKKEKVVKKVTKKVTEKKPKKAVSKPKTGEKKVKKTIAKKPKVASATKIKKPVAKTTKKPAAAKPTKKVAAKPKAAPKPKAAPKPKVAKPKKAAAPKAKKPAAEKKPKAAKKPSAKKA</sequence>
<name>H1_CHITH</name>